<proteinExistence type="inferred from homology"/>
<feature type="chain" id="PRO_0000272426" description="Phosphate import ATP-binding protein PstB">
    <location>
        <begin position="1"/>
        <end position="258"/>
    </location>
</feature>
<feature type="domain" description="ABC transporter" evidence="1">
    <location>
        <begin position="12"/>
        <end position="253"/>
    </location>
</feature>
<feature type="binding site" evidence="1">
    <location>
        <begin position="44"/>
        <end position="51"/>
    </location>
    <ligand>
        <name>ATP</name>
        <dbReference type="ChEBI" id="CHEBI:30616"/>
    </ligand>
</feature>
<comment type="function">
    <text evidence="1">Part of the ABC transporter complex PstSACB involved in phosphate import. Responsible for energy coupling to the transport system.</text>
</comment>
<comment type="catalytic activity">
    <reaction evidence="1">
        <text>phosphate(out) + ATP + H2O = ADP + 2 phosphate(in) + H(+)</text>
        <dbReference type="Rhea" id="RHEA:24440"/>
        <dbReference type="ChEBI" id="CHEBI:15377"/>
        <dbReference type="ChEBI" id="CHEBI:15378"/>
        <dbReference type="ChEBI" id="CHEBI:30616"/>
        <dbReference type="ChEBI" id="CHEBI:43474"/>
        <dbReference type="ChEBI" id="CHEBI:456216"/>
        <dbReference type="EC" id="7.3.2.1"/>
    </reaction>
</comment>
<comment type="subunit">
    <text evidence="1">The complex is composed of two ATP-binding proteins (PstB), two transmembrane proteins (PstC and PstA) and a solute-binding protein (PstS).</text>
</comment>
<comment type="subcellular location">
    <subcellularLocation>
        <location evidence="1">Cell inner membrane</location>
        <topology evidence="1">Peripheral membrane protein</topology>
    </subcellularLocation>
</comment>
<comment type="similarity">
    <text evidence="1">Belongs to the ABC transporter superfamily. Phosphate importer (TC 3.A.1.7) family.</text>
</comment>
<accession>Q2KVN7</accession>
<sequence length="258" mass="29073">MENTAQAVKSKIEVKNLNFYYGKFHAIRNVNMSIRENKVTAFIGPSGCGKSTLLRTFNRMFELYPGQRAEGEILLDGENLLTSKTDISLIRAKVGMVFQKPTPFPMSIYDNIAFGVRLFERLSKGEMDERVEWALSKAALWNEVKDKIHQSGNSLSGGQQQRLCIARGVAIKPEVLLLDEPCSALDPISTAKIEELIAELKHEYTVVIVTHNMQQAARCSDYTAYMYLGELMEFGATDQIFVKPARKETEDYITGRFG</sequence>
<dbReference type="EC" id="7.3.2.1" evidence="1"/>
<dbReference type="EMBL" id="AM167904">
    <property type="protein sequence ID" value="CAJ48552.1"/>
    <property type="molecule type" value="Genomic_DNA"/>
</dbReference>
<dbReference type="RefSeq" id="WP_012416630.1">
    <property type="nucleotide sequence ID" value="NC_010645.1"/>
</dbReference>
<dbReference type="SMR" id="Q2KVN7"/>
<dbReference type="STRING" id="360910.BAV0942"/>
<dbReference type="GeneID" id="92935865"/>
<dbReference type="KEGG" id="bav:BAV0942"/>
<dbReference type="eggNOG" id="COG1117">
    <property type="taxonomic scope" value="Bacteria"/>
</dbReference>
<dbReference type="HOGENOM" id="CLU_000604_1_22_4"/>
<dbReference type="OrthoDB" id="9802264at2"/>
<dbReference type="Proteomes" id="UP000001977">
    <property type="component" value="Chromosome"/>
</dbReference>
<dbReference type="GO" id="GO:0005886">
    <property type="term" value="C:plasma membrane"/>
    <property type="evidence" value="ECO:0007669"/>
    <property type="project" value="UniProtKB-SubCell"/>
</dbReference>
<dbReference type="GO" id="GO:0005524">
    <property type="term" value="F:ATP binding"/>
    <property type="evidence" value="ECO:0007669"/>
    <property type="project" value="UniProtKB-KW"/>
</dbReference>
<dbReference type="GO" id="GO:0016887">
    <property type="term" value="F:ATP hydrolysis activity"/>
    <property type="evidence" value="ECO:0007669"/>
    <property type="project" value="InterPro"/>
</dbReference>
<dbReference type="GO" id="GO:0015415">
    <property type="term" value="F:ATPase-coupled phosphate ion transmembrane transporter activity"/>
    <property type="evidence" value="ECO:0007669"/>
    <property type="project" value="UniProtKB-EC"/>
</dbReference>
<dbReference type="GO" id="GO:0035435">
    <property type="term" value="P:phosphate ion transmembrane transport"/>
    <property type="evidence" value="ECO:0007669"/>
    <property type="project" value="InterPro"/>
</dbReference>
<dbReference type="CDD" id="cd03260">
    <property type="entry name" value="ABC_PstB_phosphate_transporter"/>
    <property type="match status" value="1"/>
</dbReference>
<dbReference type="FunFam" id="3.40.50.300:FF:000132">
    <property type="entry name" value="Phosphate import ATP-binding protein PstB"/>
    <property type="match status" value="1"/>
</dbReference>
<dbReference type="Gene3D" id="3.40.50.300">
    <property type="entry name" value="P-loop containing nucleotide triphosphate hydrolases"/>
    <property type="match status" value="1"/>
</dbReference>
<dbReference type="InterPro" id="IPR003593">
    <property type="entry name" value="AAA+_ATPase"/>
</dbReference>
<dbReference type="InterPro" id="IPR003439">
    <property type="entry name" value="ABC_transporter-like_ATP-bd"/>
</dbReference>
<dbReference type="InterPro" id="IPR017871">
    <property type="entry name" value="ABC_transporter-like_CS"/>
</dbReference>
<dbReference type="InterPro" id="IPR027417">
    <property type="entry name" value="P-loop_NTPase"/>
</dbReference>
<dbReference type="InterPro" id="IPR005670">
    <property type="entry name" value="PstB-like"/>
</dbReference>
<dbReference type="NCBIfam" id="TIGR00972">
    <property type="entry name" value="3a0107s01c2"/>
    <property type="match status" value="1"/>
</dbReference>
<dbReference type="PANTHER" id="PTHR43423">
    <property type="entry name" value="ABC TRANSPORTER I FAMILY MEMBER 17"/>
    <property type="match status" value="1"/>
</dbReference>
<dbReference type="PANTHER" id="PTHR43423:SF3">
    <property type="entry name" value="PHOSPHATE IMPORT ATP-BINDING PROTEIN PSTB"/>
    <property type="match status" value="1"/>
</dbReference>
<dbReference type="Pfam" id="PF00005">
    <property type="entry name" value="ABC_tran"/>
    <property type="match status" value="1"/>
</dbReference>
<dbReference type="SMART" id="SM00382">
    <property type="entry name" value="AAA"/>
    <property type="match status" value="1"/>
</dbReference>
<dbReference type="SUPFAM" id="SSF52540">
    <property type="entry name" value="P-loop containing nucleoside triphosphate hydrolases"/>
    <property type="match status" value="1"/>
</dbReference>
<dbReference type="PROSITE" id="PS00211">
    <property type="entry name" value="ABC_TRANSPORTER_1"/>
    <property type="match status" value="1"/>
</dbReference>
<dbReference type="PROSITE" id="PS50893">
    <property type="entry name" value="ABC_TRANSPORTER_2"/>
    <property type="match status" value="1"/>
</dbReference>
<dbReference type="PROSITE" id="PS51238">
    <property type="entry name" value="PSTB"/>
    <property type="match status" value="1"/>
</dbReference>
<organism>
    <name type="scientific">Bordetella avium (strain 197N)</name>
    <dbReference type="NCBI Taxonomy" id="360910"/>
    <lineage>
        <taxon>Bacteria</taxon>
        <taxon>Pseudomonadati</taxon>
        <taxon>Pseudomonadota</taxon>
        <taxon>Betaproteobacteria</taxon>
        <taxon>Burkholderiales</taxon>
        <taxon>Alcaligenaceae</taxon>
        <taxon>Bordetella</taxon>
    </lineage>
</organism>
<gene>
    <name evidence="1" type="primary">pstB</name>
    <name type="synonym">phoT</name>
    <name type="ordered locus">BAV0942</name>
</gene>
<reference key="1">
    <citation type="journal article" date="2006" name="J. Bacteriol.">
        <title>Comparison of the genome sequence of the poultry pathogen Bordetella avium with those of B. bronchiseptica, B. pertussis, and B. parapertussis reveals extensive diversity in surface structures associated with host interaction.</title>
        <authorList>
            <person name="Sebaihia M."/>
            <person name="Preston A."/>
            <person name="Maskell D.J."/>
            <person name="Kuzmiak H."/>
            <person name="Connell T.D."/>
            <person name="King N.D."/>
            <person name="Orndorff P.E."/>
            <person name="Miyamoto D.M."/>
            <person name="Thomson N.R."/>
            <person name="Harris D."/>
            <person name="Goble A."/>
            <person name="Lord A."/>
            <person name="Murphy L."/>
            <person name="Quail M.A."/>
            <person name="Rutter S."/>
            <person name="Squares R."/>
            <person name="Squares S."/>
            <person name="Woodward J."/>
            <person name="Parkhill J."/>
            <person name="Temple L.M."/>
        </authorList>
    </citation>
    <scope>NUCLEOTIDE SEQUENCE [LARGE SCALE GENOMIC DNA]</scope>
    <source>
        <strain>197N</strain>
    </source>
</reference>
<evidence type="ECO:0000255" key="1">
    <source>
        <dbReference type="HAMAP-Rule" id="MF_01702"/>
    </source>
</evidence>
<keyword id="KW-0067">ATP-binding</keyword>
<keyword id="KW-0997">Cell inner membrane</keyword>
<keyword id="KW-1003">Cell membrane</keyword>
<keyword id="KW-0472">Membrane</keyword>
<keyword id="KW-0547">Nucleotide-binding</keyword>
<keyword id="KW-0592">Phosphate transport</keyword>
<keyword id="KW-1185">Reference proteome</keyword>
<keyword id="KW-1278">Translocase</keyword>
<keyword id="KW-0813">Transport</keyword>
<protein>
    <recommendedName>
        <fullName evidence="1">Phosphate import ATP-binding protein PstB</fullName>
        <ecNumber evidence="1">7.3.2.1</ecNumber>
    </recommendedName>
    <alternativeName>
        <fullName evidence="1">ABC phosphate transporter</fullName>
    </alternativeName>
    <alternativeName>
        <fullName evidence="1">Phosphate-transporting ATPase</fullName>
    </alternativeName>
</protein>
<name>PSTB_BORA1</name>